<proteinExistence type="inferred from homology"/>
<dbReference type="EC" id="2.7.1.35" evidence="1"/>
<dbReference type="EMBL" id="AE001825">
    <property type="protein sequence ID" value="AAF12189.1"/>
    <property type="status" value="ALT_INIT"/>
    <property type="molecule type" value="Genomic_DNA"/>
</dbReference>
<dbReference type="PIR" id="B75615">
    <property type="entry name" value="B75615"/>
</dbReference>
<dbReference type="RefSeq" id="NP_285508.1">
    <property type="nucleotide sequence ID" value="NC_001264.1"/>
</dbReference>
<dbReference type="SMR" id="Q9RYX0"/>
<dbReference type="STRING" id="243230.DR_A0184"/>
<dbReference type="PaxDb" id="243230-DR_A0184"/>
<dbReference type="EnsemblBacteria" id="AAF12189">
    <property type="protein sequence ID" value="AAF12189"/>
    <property type="gene ID" value="DR_A0184"/>
</dbReference>
<dbReference type="KEGG" id="dra:DR_A0184"/>
<dbReference type="PATRIC" id="fig|243230.17.peg.3073"/>
<dbReference type="eggNOG" id="COG2240">
    <property type="taxonomic scope" value="Bacteria"/>
</dbReference>
<dbReference type="HOGENOM" id="CLU_046496_3_1_0"/>
<dbReference type="InParanoid" id="Q9RYX0"/>
<dbReference type="OrthoDB" id="9800808at2"/>
<dbReference type="UniPathway" id="UPA01068">
    <property type="reaction ID" value="UER00298"/>
</dbReference>
<dbReference type="Proteomes" id="UP000002524">
    <property type="component" value="Chromosome 2"/>
</dbReference>
<dbReference type="GO" id="GO:0005829">
    <property type="term" value="C:cytosol"/>
    <property type="evidence" value="ECO:0000318"/>
    <property type="project" value="GO_Central"/>
</dbReference>
<dbReference type="GO" id="GO:0005524">
    <property type="term" value="F:ATP binding"/>
    <property type="evidence" value="ECO:0007669"/>
    <property type="project" value="UniProtKB-UniRule"/>
</dbReference>
<dbReference type="GO" id="GO:0000287">
    <property type="term" value="F:magnesium ion binding"/>
    <property type="evidence" value="ECO:0007669"/>
    <property type="project" value="UniProtKB-UniRule"/>
</dbReference>
<dbReference type="GO" id="GO:0008478">
    <property type="term" value="F:pyridoxal kinase activity"/>
    <property type="evidence" value="ECO:0000318"/>
    <property type="project" value="GO_Central"/>
</dbReference>
<dbReference type="GO" id="GO:0009443">
    <property type="term" value="P:pyridoxal 5'-phosphate salvage"/>
    <property type="evidence" value="ECO:0000318"/>
    <property type="project" value="GO_Central"/>
</dbReference>
<dbReference type="CDD" id="cd01173">
    <property type="entry name" value="pyridoxal_pyridoxamine_kinase"/>
    <property type="match status" value="1"/>
</dbReference>
<dbReference type="Gene3D" id="3.40.1190.20">
    <property type="match status" value="1"/>
</dbReference>
<dbReference type="HAMAP" id="MF_01639">
    <property type="entry name" value="PdxY"/>
    <property type="match status" value="1"/>
</dbReference>
<dbReference type="InterPro" id="IPR013749">
    <property type="entry name" value="PM/HMP-P_kinase-1"/>
</dbReference>
<dbReference type="InterPro" id="IPR004625">
    <property type="entry name" value="PyrdxlKinase"/>
</dbReference>
<dbReference type="InterPro" id="IPR023685">
    <property type="entry name" value="Pyridoxal_kinase_PdxY"/>
</dbReference>
<dbReference type="InterPro" id="IPR029056">
    <property type="entry name" value="Ribokinase-like"/>
</dbReference>
<dbReference type="NCBIfam" id="NF004398">
    <property type="entry name" value="PRK05756.1"/>
    <property type="match status" value="1"/>
</dbReference>
<dbReference type="NCBIfam" id="TIGR00687">
    <property type="entry name" value="pyridox_kin"/>
    <property type="match status" value="1"/>
</dbReference>
<dbReference type="PANTHER" id="PTHR10534">
    <property type="entry name" value="PYRIDOXAL KINASE"/>
    <property type="match status" value="1"/>
</dbReference>
<dbReference type="PANTHER" id="PTHR10534:SF2">
    <property type="entry name" value="PYRIDOXAL KINASE"/>
    <property type="match status" value="1"/>
</dbReference>
<dbReference type="Pfam" id="PF08543">
    <property type="entry name" value="Phos_pyr_kin"/>
    <property type="match status" value="1"/>
</dbReference>
<dbReference type="SUPFAM" id="SSF53613">
    <property type="entry name" value="Ribokinase-like"/>
    <property type="match status" value="1"/>
</dbReference>
<accession>Q9RYX0</accession>
<feature type="chain" id="PRO_0000269805" description="Pyridoxal kinase PdxY">
    <location>
        <begin position="1"/>
        <end position="298"/>
    </location>
</feature>
<feature type="binding site" evidence="1">
    <location>
        <position position="17"/>
    </location>
    <ligand>
        <name>substrate</name>
    </ligand>
</feature>
<feature type="binding site" evidence="1">
    <location>
        <position position="119"/>
    </location>
    <ligand>
        <name>ATP</name>
        <dbReference type="ChEBI" id="CHEBI:30616"/>
    </ligand>
</feature>
<feature type="binding site" evidence="1">
    <location>
        <position position="156"/>
    </location>
    <ligand>
        <name>ATP</name>
        <dbReference type="ChEBI" id="CHEBI:30616"/>
    </ligand>
</feature>
<feature type="binding site" evidence="1">
    <location>
        <position position="234"/>
    </location>
    <ligand>
        <name>substrate</name>
    </ligand>
</feature>
<comment type="function">
    <text evidence="1">Pyridoxal kinase involved in the salvage pathway of pyridoxal 5'-phosphate (PLP). Catalyzes the phosphorylation of pyridoxal to PLP.</text>
</comment>
<comment type="catalytic activity">
    <reaction evidence="1">
        <text>pyridoxal + ATP = pyridoxal 5'-phosphate + ADP + H(+)</text>
        <dbReference type="Rhea" id="RHEA:10224"/>
        <dbReference type="ChEBI" id="CHEBI:15378"/>
        <dbReference type="ChEBI" id="CHEBI:17310"/>
        <dbReference type="ChEBI" id="CHEBI:30616"/>
        <dbReference type="ChEBI" id="CHEBI:456216"/>
        <dbReference type="ChEBI" id="CHEBI:597326"/>
        <dbReference type="EC" id="2.7.1.35"/>
    </reaction>
</comment>
<comment type="cofactor">
    <cofactor evidence="1">
        <name>Mg(2+)</name>
        <dbReference type="ChEBI" id="CHEBI:18420"/>
    </cofactor>
</comment>
<comment type="pathway">
    <text evidence="1">Cofactor metabolism; pyridoxal 5'-phosphate salvage; pyridoxal 5'-phosphate from pyridoxal: step 1/1.</text>
</comment>
<comment type="subunit">
    <text evidence="1">Homodimer.</text>
</comment>
<comment type="similarity">
    <text evidence="1">Belongs to the pyridoxine kinase family. PdxY subfamily.</text>
</comment>
<comment type="sequence caution" evidence="2">
    <conflict type="erroneous initiation">
        <sequence resource="EMBL-CDS" id="AAF12189"/>
    </conflict>
</comment>
<sequence>MDSVTPTLPRNILSIQSWVSYGHVGNAAAIFPLQRLGFEVWGVHTVQFSNHTGYGAWTGPVFEPGVIAELLDGIEARGVLPQCDGVLSGYVGSGGTVAAVVGAVGRVRQAHPQALYCCDPVMGDVGRGVFVHPDLPALIAAQAIPAADIVTPNQFELELLTGQKVETLADALAAAHALRERLNPAGPRIVLLTSLVRADAPASSIETLAVTGEGSWLCRTPLLPLDPPRNGTGDAIAALFYGQFLRTGSAEQALTLSMSALYALLDLTHRLGTREIQLVAAQGEFERPRHLFAAERVE</sequence>
<name>PDXY_DEIRA</name>
<gene>
    <name evidence="1" type="primary">pdxY</name>
    <name type="ordered locus">DR_A0184</name>
</gene>
<keyword id="KW-0067">ATP-binding</keyword>
<keyword id="KW-0418">Kinase</keyword>
<keyword id="KW-0460">Magnesium</keyword>
<keyword id="KW-0547">Nucleotide-binding</keyword>
<keyword id="KW-1185">Reference proteome</keyword>
<keyword id="KW-0808">Transferase</keyword>
<reference key="1">
    <citation type="journal article" date="1999" name="Science">
        <title>Genome sequence of the radioresistant bacterium Deinococcus radiodurans R1.</title>
        <authorList>
            <person name="White O."/>
            <person name="Eisen J.A."/>
            <person name="Heidelberg J.F."/>
            <person name="Hickey E.K."/>
            <person name="Peterson J.D."/>
            <person name="Dodson R.J."/>
            <person name="Haft D.H."/>
            <person name="Gwinn M.L."/>
            <person name="Nelson W.C."/>
            <person name="Richardson D.L."/>
            <person name="Moffat K.S."/>
            <person name="Qin H."/>
            <person name="Jiang L."/>
            <person name="Pamphile W."/>
            <person name="Crosby M."/>
            <person name="Shen M."/>
            <person name="Vamathevan J.J."/>
            <person name="Lam P."/>
            <person name="McDonald L.A."/>
            <person name="Utterback T.R."/>
            <person name="Zalewski C."/>
            <person name="Makarova K.S."/>
            <person name="Aravind L."/>
            <person name="Daly M.J."/>
            <person name="Minton K.W."/>
            <person name="Fleischmann R.D."/>
            <person name="Ketchum K.A."/>
            <person name="Nelson K.E."/>
            <person name="Salzberg S.L."/>
            <person name="Smith H.O."/>
            <person name="Venter J.C."/>
            <person name="Fraser C.M."/>
        </authorList>
    </citation>
    <scope>NUCLEOTIDE SEQUENCE [LARGE SCALE GENOMIC DNA]</scope>
    <source>
        <strain>ATCC 13939 / DSM 20539 / JCM 16871 / CCUG 27074 / LMG 4051 / NBRC 15346 / NCIMB 9279 / VKM B-1422 / R1</strain>
    </source>
</reference>
<evidence type="ECO:0000255" key="1">
    <source>
        <dbReference type="HAMAP-Rule" id="MF_01639"/>
    </source>
</evidence>
<evidence type="ECO:0000305" key="2"/>
<organism>
    <name type="scientific">Deinococcus radiodurans (strain ATCC 13939 / DSM 20539 / JCM 16871 / CCUG 27074 / LMG 4051 / NBRC 15346 / NCIMB 9279 / VKM B-1422 / R1)</name>
    <dbReference type="NCBI Taxonomy" id="243230"/>
    <lineage>
        <taxon>Bacteria</taxon>
        <taxon>Thermotogati</taxon>
        <taxon>Deinococcota</taxon>
        <taxon>Deinococci</taxon>
        <taxon>Deinococcales</taxon>
        <taxon>Deinococcaceae</taxon>
        <taxon>Deinococcus</taxon>
    </lineage>
</organism>
<protein>
    <recommendedName>
        <fullName evidence="1">Pyridoxal kinase PdxY</fullName>
        <shortName evidence="1">PL kinase</shortName>
        <ecNumber evidence="1">2.7.1.35</ecNumber>
    </recommendedName>
</protein>